<dbReference type="EC" id="2.7.8.13" evidence="1"/>
<dbReference type="EMBL" id="CP000572">
    <property type="protein sequence ID" value="ABN91730.1"/>
    <property type="molecule type" value="Genomic_DNA"/>
</dbReference>
<dbReference type="RefSeq" id="WP_004532005.1">
    <property type="nucleotide sequence ID" value="NC_009076.1"/>
</dbReference>
<dbReference type="SMR" id="A3NZL8"/>
<dbReference type="GeneID" id="93061630"/>
<dbReference type="KEGG" id="bpl:BURPS1106A_3553"/>
<dbReference type="HOGENOM" id="CLU_023982_0_0_4"/>
<dbReference type="UniPathway" id="UPA00219"/>
<dbReference type="Proteomes" id="UP000006738">
    <property type="component" value="Chromosome I"/>
</dbReference>
<dbReference type="GO" id="GO:0005886">
    <property type="term" value="C:plasma membrane"/>
    <property type="evidence" value="ECO:0007669"/>
    <property type="project" value="UniProtKB-SubCell"/>
</dbReference>
<dbReference type="GO" id="GO:0046872">
    <property type="term" value="F:metal ion binding"/>
    <property type="evidence" value="ECO:0007669"/>
    <property type="project" value="UniProtKB-KW"/>
</dbReference>
<dbReference type="GO" id="GO:0008963">
    <property type="term" value="F:phospho-N-acetylmuramoyl-pentapeptide-transferase activity"/>
    <property type="evidence" value="ECO:0007669"/>
    <property type="project" value="UniProtKB-UniRule"/>
</dbReference>
<dbReference type="GO" id="GO:0051992">
    <property type="term" value="F:UDP-N-acetylmuramoyl-L-alanyl-D-glutamyl-meso-2,6-diaminopimelyl-D-alanyl-D-alanine:undecaprenyl-phosphate transferase activity"/>
    <property type="evidence" value="ECO:0007669"/>
    <property type="project" value="RHEA"/>
</dbReference>
<dbReference type="GO" id="GO:0051301">
    <property type="term" value="P:cell division"/>
    <property type="evidence" value="ECO:0007669"/>
    <property type="project" value="UniProtKB-KW"/>
</dbReference>
<dbReference type="GO" id="GO:0071555">
    <property type="term" value="P:cell wall organization"/>
    <property type="evidence" value="ECO:0007669"/>
    <property type="project" value="UniProtKB-KW"/>
</dbReference>
<dbReference type="GO" id="GO:0009252">
    <property type="term" value="P:peptidoglycan biosynthetic process"/>
    <property type="evidence" value="ECO:0007669"/>
    <property type="project" value="UniProtKB-UniRule"/>
</dbReference>
<dbReference type="GO" id="GO:0008360">
    <property type="term" value="P:regulation of cell shape"/>
    <property type="evidence" value="ECO:0007669"/>
    <property type="project" value="UniProtKB-KW"/>
</dbReference>
<dbReference type="CDD" id="cd06852">
    <property type="entry name" value="GT_MraY"/>
    <property type="match status" value="1"/>
</dbReference>
<dbReference type="HAMAP" id="MF_00038">
    <property type="entry name" value="MraY"/>
    <property type="match status" value="1"/>
</dbReference>
<dbReference type="InterPro" id="IPR000715">
    <property type="entry name" value="Glycosyl_transferase_4"/>
</dbReference>
<dbReference type="InterPro" id="IPR003524">
    <property type="entry name" value="PNAcMuramoyl-5peptid_Trfase"/>
</dbReference>
<dbReference type="InterPro" id="IPR018480">
    <property type="entry name" value="PNAcMuramoyl-5peptid_Trfase_CS"/>
</dbReference>
<dbReference type="NCBIfam" id="TIGR00445">
    <property type="entry name" value="mraY"/>
    <property type="match status" value="1"/>
</dbReference>
<dbReference type="PANTHER" id="PTHR22926">
    <property type="entry name" value="PHOSPHO-N-ACETYLMURAMOYL-PENTAPEPTIDE-TRANSFERASE"/>
    <property type="match status" value="1"/>
</dbReference>
<dbReference type="PANTHER" id="PTHR22926:SF5">
    <property type="entry name" value="PHOSPHO-N-ACETYLMURAMOYL-PENTAPEPTIDE-TRANSFERASE HOMOLOG"/>
    <property type="match status" value="1"/>
</dbReference>
<dbReference type="Pfam" id="PF00953">
    <property type="entry name" value="Glycos_transf_4"/>
    <property type="match status" value="1"/>
</dbReference>
<dbReference type="Pfam" id="PF10555">
    <property type="entry name" value="MraY_sig1"/>
    <property type="match status" value="1"/>
</dbReference>
<dbReference type="PROSITE" id="PS01347">
    <property type="entry name" value="MRAY_1"/>
    <property type="match status" value="1"/>
</dbReference>
<dbReference type="PROSITE" id="PS01348">
    <property type="entry name" value="MRAY_2"/>
    <property type="match status" value="1"/>
</dbReference>
<gene>
    <name evidence="1" type="primary">mraY</name>
    <name type="ordered locus">BURPS1106A_3553</name>
</gene>
<name>MRAY_BURP0</name>
<organism>
    <name type="scientific">Burkholderia pseudomallei (strain 1106a)</name>
    <dbReference type="NCBI Taxonomy" id="357348"/>
    <lineage>
        <taxon>Bacteria</taxon>
        <taxon>Pseudomonadati</taxon>
        <taxon>Pseudomonadota</taxon>
        <taxon>Betaproteobacteria</taxon>
        <taxon>Burkholderiales</taxon>
        <taxon>Burkholderiaceae</taxon>
        <taxon>Burkholderia</taxon>
        <taxon>pseudomallei group</taxon>
    </lineage>
</organism>
<proteinExistence type="inferred from homology"/>
<keyword id="KW-0131">Cell cycle</keyword>
<keyword id="KW-0132">Cell division</keyword>
<keyword id="KW-0997">Cell inner membrane</keyword>
<keyword id="KW-1003">Cell membrane</keyword>
<keyword id="KW-0133">Cell shape</keyword>
<keyword id="KW-0961">Cell wall biogenesis/degradation</keyword>
<keyword id="KW-0460">Magnesium</keyword>
<keyword id="KW-0472">Membrane</keyword>
<keyword id="KW-0479">Metal-binding</keyword>
<keyword id="KW-0573">Peptidoglycan synthesis</keyword>
<keyword id="KW-0808">Transferase</keyword>
<keyword id="KW-0812">Transmembrane</keyword>
<keyword id="KW-1133">Transmembrane helix</keyword>
<reference key="1">
    <citation type="journal article" date="2010" name="Genome Biol. Evol.">
        <title>Continuing evolution of Burkholderia mallei through genome reduction and large-scale rearrangements.</title>
        <authorList>
            <person name="Losada L."/>
            <person name="Ronning C.M."/>
            <person name="DeShazer D."/>
            <person name="Woods D."/>
            <person name="Fedorova N."/>
            <person name="Kim H.S."/>
            <person name="Shabalina S.A."/>
            <person name="Pearson T.R."/>
            <person name="Brinkac L."/>
            <person name="Tan P."/>
            <person name="Nandi T."/>
            <person name="Crabtree J."/>
            <person name="Badger J."/>
            <person name="Beckstrom-Sternberg S."/>
            <person name="Saqib M."/>
            <person name="Schutzer S.E."/>
            <person name="Keim P."/>
            <person name="Nierman W.C."/>
        </authorList>
    </citation>
    <scope>NUCLEOTIDE SEQUENCE [LARGE SCALE GENOMIC DNA]</scope>
    <source>
        <strain>1106a</strain>
    </source>
</reference>
<sequence length="389" mass="42910">MLLALAQWLQGDASFLRLFTYLTFRAVMATITALVIGLVCGPWVIRKLTQMKVGQAVRKDGPQTHLVKSGTPTMGGVLILIGIAVATLLWGDLTNRFIWIVMLVTFGFGVIGWVDDYRKVVYKDPRGMSSREKYFWQSVIGLFAAVYLAFSVSEANNVRVFDLFMAWVRSGLSMGLPARADLMLPFLKSISYPLGVWGFIALTYFVIVGASNAVNLTDGLDGLVIMPVVLVGASLGVFAYVMGSAVYSKYLLFPHIPGAGELLIFCSAMGGAGLAFLWYNTHPAQVFMGDVGALALGGALGTVAVIVRQEIVLFIMGGIFVAETLSVMLQVTWFKYTKRRYGEGRRIFKMAPLHHHFELSGWKETQVVVRFWIITLMLCLFGLSTLKLR</sequence>
<evidence type="ECO:0000255" key="1">
    <source>
        <dbReference type="HAMAP-Rule" id="MF_00038"/>
    </source>
</evidence>
<accession>A3NZL8</accession>
<comment type="function">
    <text evidence="1">Catalyzes the initial step of the lipid cycle reactions in the biosynthesis of the cell wall peptidoglycan: transfers peptidoglycan precursor phospho-MurNAc-pentapeptide from UDP-MurNAc-pentapeptide onto the lipid carrier undecaprenyl phosphate, yielding undecaprenyl-pyrophosphoryl-MurNAc-pentapeptide, known as lipid I.</text>
</comment>
<comment type="catalytic activity">
    <reaction evidence="1">
        <text>UDP-N-acetyl-alpha-D-muramoyl-L-alanyl-gamma-D-glutamyl-meso-2,6-diaminopimeloyl-D-alanyl-D-alanine + di-trans,octa-cis-undecaprenyl phosphate = di-trans,octa-cis-undecaprenyl diphospho-N-acetyl-alpha-D-muramoyl-L-alanyl-D-glutamyl-meso-2,6-diaminopimeloyl-D-alanyl-D-alanine + UMP</text>
        <dbReference type="Rhea" id="RHEA:28386"/>
        <dbReference type="ChEBI" id="CHEBI:57865"/>
        <dbReference type="ChEBI" id="CHEBI:60392"/>
        <dbReference type="ChEBI" id="CHEBI:61386"/>
        <dbReference type="ChEBI" id="CHEBI:61387"/>
        <dbReference type="EC" id="2.7.8.13"/>
    </reaction>
</comment>
<comment type="cofactor">
    <cofactor evidence="1">
        <name>Mg(2+)</name>
        <dbReference type="ChEBI" id="CHEBI:18420"/>
    </cofactor>
</comment>
<comment type="pathway">
    <text evidence="1">Cell wall biogenesis; peptidoglycan biosynthesis.</text>
</comment>
<comment type="subcellular location">
    <subcellularLocation>
        <location evidence="1">Cell inner membrane</location>
        <topology evidence="1">Multi-pass membrane protein</topology>
    </subcellularLocation>
</comment>
<comment type="similarity">
    <text evidence="1">Belongs to the glycosyltransferase 4 family. MraY subfamily.</text>
</comment>
<feature type="chain" id="PRO_1000002950" description="Phospho-N-acetylmuramoyl-pentapeptide-transferase">
    <location>
        <begin position="1"/>
        <end position="389"/>
    </location>
</feature>
<feature type="transmembrane region" description="Helical" evidence="1">
    <location>
        <begin position="25"/>
        <end position="45"/>
    </location>
</feature>
<feature type="transmembrane region" description="Helical" evidence="1">
    <location>
        <begin position="73"/>
        <end position="93"/>
    </location>
</feature>
<feature type="transmembrane region" description="Helical" evidence="1">
    <location>
        <begin position="97"/>
        <end position="117"/>
    </location>
</feature>
<feature type="transmembrane region" description="Helical" evidence="1">
    <location>
        <begin position="135"/>
        <end position="155"/>
    </location>
</feature>
<feature type="transmembrane region" description="Helical" evidence="1">
    <location>
        <begin position="190"/>
        <end position="210"/>
    </location>
</feature>
<feature type="transmembrane region" description="Helical" evidence="1">
    <location>
        <begin position="222"/>
        <end position="242"/>
    </location>
</feature>
<feature type="transmembrane region" description="Helical" evidence="1">
    <location>
        <begin position="258"/>
        <end position="278"/>
    </location>
</feature>
<feature type="transmembrane region" description="Helical" evidence="1">
    <location>
        <begin position="286"/>
        <end position="306"/>
    </location>
</feature>
<feature type="transmembrane region" description="Helical" evidence="1">
    <location>
        <begin position="311"/>
        <end position="331"/>
    </location>
</feature>
<feature type="transmembrane region" description="Helical" evidence="1">
    <location>
        <begin position="366"/>
        <end position="386"/>
    </location>
</feature>
<protein>
    <recommendedName>
        <fullName evidence="1">Phospho-N-acetylmuramoyl-pentapeptide-transferase</fullName>
        <ecNumber evidence="1">2.7.8.13</ecNumber>
    </recommendedName>
    <alternativeName>
        <fullName evidence="1">UDP-MurNAc-pentapeptide phosphotransferase</fullName>
    </alternativeName>
</protein>